<protein>
    <recommendedName>
        <fullName>Chorion class A protein Ld3/Ld29</fullName>
    </recommendedName>
</protein>
<feature type="signal peptide" evidence="1">
    <location>
        <begin position="1"/>
        <end position="21"/>
    </location>
</feature>
<feature type="chain" id="PRO_0000005390" description="Chorion class A protein Ld3/Ld29">
    <location>
        <begin position="22"/>
        <end position="146"/>
    </location>
</feature>
<keyword id="KW-0677">Repeat</keyword>
<keyword id="KW-0732">Signal</keyword>
<reference key="1">
    <citation type="journal article" date="1994" name="J. Mol. Evol.">
        <title>Evolution of chorion gene families in lepidoptera: characterization of 15 cDNAs from the gypsy moth.</title>
        <authorList>
            <person name="Leclerc R.F."/>
            <person name="Regier J.C."/>
        </authorList>
    </citation>
    <scope>NUCLEOTIDE SEQUENCE [MRNA]</scope>
    <source>
        <tissue>Choriogenic follicle</tissue>
    </source>
</reference>
<evidence type="ECO:0000255" key="1"/>
<evidence type="ECO:0000305" key="2"/>
<proteinExistence type="evidence at transcript level"/>
<sequence length="146" mass="14317">MNTFALLSVFIQACLVQSVFSQCTSRAAVAADRGIIGGYGFGAPCGLAGGYGLEAPYGWAGYADYGYPAGAYGIDAYGGIGEGNVAVAGELPVAGTTAVAGQVPIMGAVKFGGDVCAAGSVSIAGKCACGCGDYGYGYGLGAPYLY</sequence>
<name>CHA3_LYMDI</name>
<accession>P43513</accession>
<organism>
    <name type="scientific">Lymantria dispar</name>
    <name type="common">Gypsy moth</name>
    <name type="synonym">Porthetria dispar</name>
    <dbReference type="NCBI Taxonomy" id="13123"/>
    <lineage>
        <taxon>Eukaryota</taxon>
        <taxon>Metazoa</taxon>
        <taxon>Ecdysozoa</taxon>
        <taxon>Arthropoda</taxon>
        <taxon>Hexapoda</taxon>
        <taxon>Insecta</taxon>
        <taxon>Pterygota</taxon>
        <taxon>Neoptera</taxon>
        <taxon>Endopterygota</taxon>
        <taxon>Lepidoptera</taxon>
        <taxon>Glossata</taxon>
        <taxon>Ditrysia</taxon>
        <taxon>Noctuoidea</taxon>
        <taxon>Erebidae</taxon>
        <taxon>Lymantriinae</taxon>
        <taxon>Lymantria</taxon>
    </lineage>
</organism>
<comment type="function">
    <text>This protein is one of many from the eggshell of the gypsy moth.</text>
</comment>
<comment type="similarity">
    <text evidence="2">Belongs to the chorion protein family.</text>
</comment>
<dbReference type="EMBL" id="U04659">
    <property type="protein sequence ID" value="AAA67859.1"/>
    <property type="molecule type" value="mRNA"/>
</dbReference>
<dbReference type="EMBL" id="U04666">
    <property type="protein sequence ID" value="AAA67866.1"/>
    <property type="molecule type" value="mRNA"/>
</dbReference>
<dbReference type="GO" id="GO:0042600">
    <property type="term" value="C:egg chorion"/>
    <property type="evidence" value="ECO:0007669"/>
    <property type="project" value="InterPro"/>
</dbReference>
<dbReference type="GO" id="GO:0005213">
    <property type="term" value="F:structural constituent of egg chorion"/>
    <property type="evidence" value="ECO:0007669"/>
    <property type="project" value="InterPro"/>
</dbReference>
<dbReference type="GO" id="GO:0007304">
    <property type="term" value="P:chorion-containing eggshell formation"/>
    <property type="evidence" value="ECO:0007669"/>
    <property type="project" value="InterPro"/>
</dbReference>
<dbReference type="InterPro" id="IPR002635">
    <property type="entry name" value="Chorion"/>
</dbReference>
<dbReference type="Pfam" id="PF01723">
    <property type="entry name" value="Chorion_1"/>
    <property type="match status" value="2"/>
</dbReference>